<comment type="function">
    <text>Does not appear to have detectable kinase activity.</text>
</comment>
<comment type="cofactor">
    <cofactor evidence="1">
        <name>Ca(2+)</name>
        <dbReference type="ChEBI" id="CHEBI:29108"/>
    </cofactor>
</comment>
<comment type="subunit">
    <text evidence="1">Interacts with calmodulin, in the presence of calcium.</text>
</comment>
<comment type="subcellular location">
    <subcellularLocation>
        <location>Cytoplasmic vesicle membrane</location>
        <topology>Peripheral membrane protein</topology>
    </subcellularLocation>
    <text evidence="1">May be associated with vesicular structures.</text>
</comment>
<comment type="tissue specificity">
    <text evidence="4">Ubiquitously expressed.</text>
</comment>
<comment type="domain">
    <text>The protein kinase domain is predicted to be catalytically inactive.</text>
</comment>
<comment type="similarity">
    <text evidence="5">Belongs to the protein kinase superfamily. CAMK Ser/Thr protein kinase family.</text>
</comment>
<keyword id="KW-0112">Calmodulin-binding</keyword>
<keyword id="KW-0968">Cytoplasmic vesicle</keyword>
<keyword id="KW-0472">Membrane</keyword>
<keyword id="KW-1185">Reference proteome</keyword>
<name>CAMKV_TAKRU</name>
<dbReference type="EMBL" id="AJ010348">
    <property type="protein sequence ID" value="CAA09101.1"/>
    <property type="molecule type" value="Genomic_DNA"/>
</dbReference>
<dbReference type="PIR" id="T30814">
    <property type="entry name" value="T30814"/>
</dbReference>
<dbReference type="SMR" id="Q9YGM4"/>
<dbReference type="STRING" id="31033.ENSTRUP00000064119"/>
<dbReference type="eggNOG" id="KOG0032">
    <property type="taxonomic scope" value="Eukaryota"/>
</dbReference>
<dbReference type="InParanoid" id="Q9YGM4"/>
<dbReference type="Proteomes" id="UP000005226">
    <property type="component" value="Unplaced"/>
</dbReference>
<dbReference type="GO" id="GO:0030659">
    <property type="term" value="C:cytoplasmic vesicle membrane"/>
    <property type="evidence" value="ECO:0007669"/>
    <property type="project" value="UniProtKB-SubCell"/>
</dbReference>
<dbReference type="GO" id="GO:0005524">
    <property type="term" value="F:ATP binding"/>
    <property type="evidence" value="ECO:0007669"/>
    <property type="project" value="InterPro"/>
</dbReference>
<dbReference type="GO" id="GO:0005516">
    <property type="term" value="F:calmodulin binding"/>
    <property type="evidence" value="ECO:0007669"/>
    <property type="project" value="UniProtKB-KW"/>
</dbReference>
<dbReference type="GO" id="GO:0004672">
    <property type="term" value="F:protein kinase activity"/>
    <property type="evidence" value="ECO:0007669"/>
    <property type="project" value="InterPro"/>
</dbReference>
<dbReference type="FunFam" id="1.10.510.10:FF:000188">
    <property type="entry name" value="CaM kinase-like vesicle-associated, like"/>
    <property type="match status" value="1"/>
</dbReference>
<dbReference type="FunFam" id="3.30.200.20:FF:000155">
    <property type="entry name" value="CaM kinase-like vesicle-associated, like"/>
    <property type="match status" value="1"/>
</dbReference>
<dbReference type="Gene3D" id="3.30.200.20">
    <property type="entry name" value="Phosphorylase Kinase, domain 1"/>
    <property type="match status" value="1"/>
</dbReference>
<dbReference type="Gene3D" id="1.10.510.10">
    <property type="entry name" value="Transferase(Phosphotransferase) domain 1"/>
    <property type="match status" value="1"/>
</dbReference>
<dbReference type="InterPro" id="IPR011009">
    <property type="entry name" value="Kinase-like_dom_sf"/>
</dbReference>
<dbReference type="InterPro" id="IPR000719">
    <property type="entry name" value="Prot_kinase_dom"/>
</dbReference>
<dbReference type="PANTHER" id="PTHR24347">
    <property type="entry name" value="SERINE/THREONINE-PROTEIN KINASE"/>
    <property type="match status" value="1"/>
</dbReference>
<dbReference type="Pfam" id="PF00069">
    <property type="entry name" value="Pkinase"/>
    <property type="match status" value="1"/>
</dbReference>
<dbReference type="SUPFAM" id="SSF56112">
    <property type="entry name" value="Protein kinase-like (PK-like)"/>
    <property type="match status" value="1"/>
</dbReference>
<dbReference type="PROSITE" id="PS50011">
    <property type="entry name" value="PROTEIN_KINASE_DOM"/>
    <property type="match status" value="1"/>
</dbReference>
<accession>Q9YGM4</accession>
<feature type="chain" id="PRO_0000250098" description="CaM kinase-like vesicle-associated protein">
    <location>
        <begin position="1"/>
        <end position="421"/>
    </location>
</feature>
<feature type="domain" description="Protein kinase" evidence="2">
    <location>
        <begin position="24"/>
        <end position="284"/>
    </location>
</feature>
<feature type="region of interest" description="Disordered" evidence="3">
    <location>
        <begin position="326"/>
        <end position="421"/>
    </location>
</feature>
<feature type="compositionally biased region" description="Low complexity" evidence="3">
    <location>
        <begin position="330"/>
        <end position="340"/>
    </location>
</feature>
<feature type="compositionally biased region" description="Low complexity" evidence="3">
    <location>
        <begin position="390"/>
        <end position="406"/>
    </location>
</feature>
<proteinExistence type="evidence at transcript level"/>
<gene>
    <name type="primary">camkv</name>
</gene>
<sequence length="421" mass="47328">MPFGCLTLGEKKDYNSPSEVTDKYDLGQVVKSEEFCEIFRAKDRNTLKMYTCKKFNKKDGRKVRKAAKNEIMILKMVKHHNILQLVDAFETKKEYFIFLELATGREVFDWILDQGYYSERDTSNVMRQVLEAVAYLHSLKIVHRNLKNLVYFNRLKHSKIVISDFQLAKLENGLIKDPCGTPEYLAPEVIGRQRYGRPVDCWAIGVIMYILLSGNPPFYDDGDEEDSDSRDKNLFLKILSGDYEFDSPYWDDISDSAKTLVASLMEVDQDQRLTAQEAIAHEWISGNAASDKNIKDGVCAQIEKNFAKAKWKKAVRVTTLMKRLRASEQGDTGASGLAAGATGGPPDPNMPGGSLLAASIKTALSEKAADAQTSTIPSLPQPPAARPEEQQQAQQQQQAQQQQQARCNGDVPQMLPQRKGY</sequence>
<evidence type="ECO:0000250" key="1"/>
<evidence type="ECO:0000255" key="2">
    <source>
        <dbReference type="PROSITE-ProRule" id="PRU00159"/>
    </source>
</evidence>
<evidence type="ECO:0000256" key="3">
    <source>
        <dbReference type="SAM" id="MobiDB-lite"/>
    </source>
</evidence>
<evidence type="ECO:0000269" key="4">
    <source>
    </source>
</evidence>
<evidence type="ECO:0000305" key="5"/>
<organism>
    <name type="scientific">Takifugu rubripes</name>
    <name type="common">Japanese pufferfish</name>
    <name type="synonym">Fugu rubripes</name>
    <dbReference type="NCBI Taxonomy" id="31033"/>
    <lineage>
        <taxon>Eukaryota</taxon>
        <taxon>Metazoa</taxon>
        <taxon>Chordata</taxon>
        <taxon>Craniata</taxon>
        <taxon>Vertebrata</taxon>
        <taxon>Euteleostomi</taxon>
        <taxon>Actinopterygii</taxon>
        <taxon>Neopterygii</taxon>
        <taxon>Teleostei</taxon>
        <taxon>Neoteleostei</taxon>
        <taxon>Acanthomorphata</taxon>
        <taxon>Eupercaria</taxon>
        <taxon>Tetraodontiformes</taxon>
        <taxon>Tetradontoidea</taxon>
        <taxon>Tetraodontidae</taxon>
        <taxon>Takifugu</taxon>
    </lineage>
</organism>
<reference key="1">
    <citation type="journal article" date="1999" name="FEBS Lett.">
        <title>Three receptor genes for plasminogen related growth factors in the genome of the puffer fish Fugu rubripes.</title>
        <authorList>
            <person name="Cottage A."/>
            <person name="Clark M."/>
            <person name="Hawker K."/>
            <person name="Umrania Y."/>
            <person name="Wheller D."/>
            <person name="Bishop M."/>
            <person name="Elgar G."/>
        </authorList>
    </citation>
    <scope>NUCLEOTIDE SEQUENCE [GENOMIC DNA]</scope>
    <scope>TISSUE SPECIFICITY</scope>
</reference>
<protein>
    <recommendedName>
        <fullName>CaM kinase-like vesicle-associated protein</fullName>
    </recommendedName>
</protein>